<organism>
    <name type="scientific">Lactobacillus delbrueckii subsp. bulgaricus (strain ATCC BAA-365 / Lb-18)</name>
    <dbReference type="NCBI Taxonomy" id="321956"/>
    <lineage>
        <taxon>Bacteria</taxon>
        <taxon>Bacillati</taxon>
        <taxon>Bacillota</taxon>
        <taxon>Bacilli</taxon>
        <taxon>Lactobacillales</taxon>
        <taxon>Lactobacillaceae</taxon>
        <taxon>Lactobacillus</taxon>
    </lineage>
</organism>
<keyword id="KW-0240">DNA-directed RNA polymerase</keyword>
<keyword id="KW-0548">Nucleotidyltransferase</keyword>
<keyword id="KW-0804">Transcription</keyword>
<keyword id="KW-0808">Transferase</keyword>
<proteinExistence type="inferred from homology"/>
<evidence type="ECO:0000255" key="1">
    <source>
        <dbReference type="HAMAP-Rule" id="MF_00357"/>
    </source>
</evidence>
<evidence type="ECO:0000255" key="2">
    <source>
        <dbReference type="PROSITE-ProRule" id="PRU01261"/>
    </source>
</evidence>
<evidence type="ECO:0000256" key="3">
    <source>
        <dbReference type="SAM" id="MobiDB-lite"/>
    </source>
</evidence>
<dbReference type="EMBL" id="CP000412">
    <property type="protein sequence ID" value="ABJ57970.1"/>
    <property type="molecule type" value="Genomic_DNA"/>
</dbReference>
<dbReference type="RefSeq" id="WP_011678011.1">
    <property type="nucleotide sequence ID" value="NC_008529.1"/>
</dbReference>
<dbReference type="SMR" id="Q04C52"/>
<dbReference type="KEGG" id="lbu:LBUL_0308"/>
<dbReference type="HOGENOM" id="CLU_116648_0_0_9"/>
<dbReference type="BioCyc" id="LDEL321956:LBUL_RS01440-MONOMER"/>
<dbReference type="GO" id="GO:0000428">
    <property type="term" value="C:DNA-directed RNA polymerase complex"/>
    <property type="evidence" value="ECO:0007669"/>
    <property type="project" value="UniProtKB-KW"/>
</dbReference>
<dbReference type="GO" id="GO:0003899">
    <property type="term" value="F:DNA-directed RNA polymerase activity"/>
    <property type="evidence" value="ECO:0007669"/>
    <property type="project" value="UniProtKB-UniRule"/>
</dbReference>
<dbReference type="GO" id="GO:0006351">
    <property type="term" value="P:DNA-templated transcription"/>
    <property type="evidence" value="ECO:0007669"/>
    <property type="project" value="InterPro"/>
</dbReference>
<dbReference type="GO" id="GO:0006355">
    <property type="term" value="P:regulation of DNA-templated transcription"/>
    <property type="evidence" value="ECO:0007669"/>
    <property type="project" value="UniProtKB-UniRule"/>
</dbReference>
<dbReference type="Gene3D" id="1.10.10.1250">
    <property type="entry name" value="RNA polymerase, subunit delta, N-terminal domain"/>
    <property type="match status" value="1"/>
</dbReference>
<dbReference type="HAMAP" id="MF_00357">
    <property type="entry name" value="RNApol_bact_RpoE"/>
    <property type="match status" value="1"/>
</dbReference>
<dbReference type="InterPro" id="IPR007759">
    <property type="entry name" value="Asxl_HARE-HTH"/>
</dbReference>
<dbReference type="InterPro" id="IPR038087">
    <property type="entry name" value="RNAP_delta_N_dom_sf"/>
</dbReference>
<dbReference type="InterPro" id="IPR029757">
    <property type="entry name" value="RpoE"/>
</dbReference>
<dbReference type="NCBIfam" id="TIGR04567">
    <property type="entry name" value="RNAP_delt_lowGC"/>
    <property type="match status" value="1"/>
</dbReference>
<dbReference type="Pfam" id="PF05066">
    <property type="entry name" value="HARE-HTH"/>
    <property type="match status" value="1"/>
</dbReference>
<dbReference type="PROSITE" id="PS51913">
    <property type="entry name" value="HTH_HARE"/>
    <property type="match status" value="1"/>
</dbReference>
<protein>
    <recommendedName>
        <fullName evidence="1">Probable DNA-directed RNA polymerase subunit delta</fullName>
    </recommendedName>
    <alternativeName>
        <fullName evidence="1">RNAP delta factor</fullName>
    </alternativeName>
</protein>
<sequence>MGLADFKDVDRNELSMIEVAHAILEDRGERMAFADIVNEVQKYLNKSDEEIRQRLPQFYTDMNTDGRFISMGENVWALRTWFKFEAVDEEVDHPEDDGDEESTRKHHKKVNTFLATTEGDDVIDYENDDPEDEDLSDDSDADEDDADDNSGDDYDDNEDDDDDDSLLDGIEDQLSQMDDDDLDDDEDEE</sequence>
<accession>Q04C52</accession>
<name>RPOE_LACDB</name>
<gene>
    <name evidence="1" type="primary">rpoE</name>
    <name type="ordered locus">LBUL_0308</name>
</gene>
<comment type="function">
    <text evidence="1">Participates in both the initiation and recycling phases of transcription. In the presence of the delta subunit, RNAP displays an increased specificity of transcription, a decreased affinity for nucleic acids, and an increased efficiency of RNA synthesis because of enhanced recycling.</text>
</comment>
<comment type="subunit">
    <text evidence="1">RNAP is composed of a core of 2 alpha, a beta and a beta' subunits. The core is associated with a delta subunit and one of several sigma factors.</text>
</comment>
<comment type="similarity">
    <text evidence="1">Belongs to the RpoE family.</text>
</comment>
<reference key="1">
    <citation type="journal article" date="2006" name="Proc. Natl. Acad. Sci. U.S.A.">
        <title>Comparative genomics of the lactic acid bacteria.</title>
        <authorList>
            <person name="Makarova K.S."/>
            <person name="Slesarev A."/>
            <person name="Wolf Y.I."/>
            <person name="Sorokin A."/>
            <person name="Mirkin B."/>
            <person name="Koonin E.V."/>
            <person name="Pavlov A."/>
            <person name="Pavlova N."/>
            <person name="Karamychev V."/>
            <person name="Polouchine N."/>
            <person name="Shakhova V."/>
            <person name="Grigoriev I."/>
            <person name="Lou Y."/>
            <person name="Rohksar D."/>
            <person name="Lucas S."/>
            <person name="Huang K."/>
            <person name="Goodstein D.M."/>
            <person name="Hawkins T."/>
            <person name="Plengvidhya V."/>
            <person name="Welker D."/>
            <person name="Hughes J."/>
            <person name="Goh Y."/>
            <person name="Benson A."/>
            <person name="Baldwin K."/>
            <person name="Lee J.-H."/>
            <person name="Diaz-Muniz I."/>
            <person name="Dosti B."/>
            <person name="Smeianov V."/>
            <person name="Wechter W."/>
            <person name="Barabote R."/>
            <person name="Lorca G."/>
            <person name="Altermann E."/>
            <person name="Barrangou R."/>
            <person name="Ganesan B."/>
            <person name="Xie Y."/>
            <person name="Rawsthorne H."/>
            <person name="Tamir D."/>
            <person name="Parker C."/>
            <person name="Breidt F."/>
            <person name="Broadbent J.R."/>
            <person name="Hutkins R."/>
            <person name="O'Sullivan D."/>
            <person name="Steele J."/>
            <person name="Unlu G."/>
            <person name="Saier M.H. Jr."/>
            <person name="Klaenhammer T."/>
            <person name="Richardson P."/>
            <person name="Kozyavkin S."/>
            <person name="Weimer B.C."/>
            <person name="Mills D.A."/>
        </authorList>
    </citation>
    <scope>NUCLEOTIDE SEQUENCE [LARGE SCALE GENOMIC DNA]</scope>
    <source>
        <strain>ATCC BAA-365 / Lb-18</strain>
    </source>
</reference>
<feature type="chain" id="PRO_0000303127" description="Probable DNA-directed RNA polymerase subunit delta">
    <location>
        <begin position="1"/>
        <end position="189"/>
    </location>
</feature>
<feature type="domain" description="HTH HARE-type" evidence="2">
    <location>
        <begin position="14"/>
        <end position="81"/>
    </location>
</feature>
<feature type="region of interest" description="Disordered" evidence="3">
    <location>
        <begin position="90"/>
        <end position="189"/>
    </location>
</feature>
<feature type="compositionally biased region" description="Acidic residues" evidence="3">
    <location>
        <begin position="90"/>
        <end position="100"/>
    </location>
</feature>
<feature type="compositionally biased region" description="Acidic residues" evidence="3">
    <location>
        <begin position="118"/>
        <end position="189"/>
    </location>
</feature>